<evidence type="ECO:0000305" key="1"/>
<feature type="chain" id="PRO_0000099605" description="Protein K6">
    <location>
        <begin position="1"/>
        <end position="81"/>
    </location>
</feature>
<reference key="1">
    <citation type="journal article" date="1990" name="Virology">
        <title>The complete DNA sequence of vaccinia virus.</title>
        <authorList>
            <person name="Goebel S.J."/>
            <person name="Johnson G.P."/>
            <person name="Perkus M.E."/>
            <person name="Davis S.W."/>
            <person name="Winslow J.P."/>
            <person name="Paoletti E."/>
        </authorList>
    </citation>
    <scope>NUCLEOTIDE SEQUENCE [LARGE SCALE GENOMIC DNA]</scope>
</reference>
<reference key="2">
    <citation type="journal article" date="1990" name="Virology">
        <title>Appendix to 'The complete DNA sequence of vaccinia virus'.</title>
        <authorList>
            <person name="Goebel S.J."/>
            <person name="Johnson G.P."/>
            <person name="Perkus M.E."/>
            <person name="Davis S.W."/>
            <person name="Winslow J.P."/>
            <person name="Paoletti E."/>
        </authorList>
    </citation>
    <scope>NUCLEOTIDE SEQUENCE [LARGE SCALE GENOMIC DNA]</scope>
</reference>
<protein>
    <recommendedName>
        <fullName>Protein K6</fullName>
    </recommendedName>
</protein>
<organismHost>
    <name type="scientific">Homo sapiens</name>
    <name type="common">Human</name>
    <dbReference type="NCBI Taxonomy" id="9606"/>
</organismHost>
<gene>
    <name type="ORF">K6L</name>
</gene>
<proteinExistence type="inferred from homology"/>
<accession>P68465</accession>
<accession>P18381</accession>
<comment type="similarity">
    <text evidence="1">Belongs to the poxviridae K6 protein family.</text>
</comment>
<organism>
    <name type="scientific">Vaccinia virus (strain Copenhagen)</name>
    <name type="common">VACV</name>
    <dbReference type="NCBI Taxonomy" id="10249"/>
    <lineage>
        <taxon>Viruses</taxon>
        <taxon>Varidnaviria</taxon>
        <taxon>Bamfordvirae</taxon>
        <taxon>Nucleocytoviricota</taxon>
        <taxon>Pokkesviricetes</taxon>
        <taxon>Chitovirales</taxon>
        <taxon>Poxviridae</taxon>
        <taxon>Chordopoxvirinae</taxon>
        <taxon>Orthopoxvirus</taxon>
        <taxon>Vaccinia virus</taxon>
    </lineage>
</organism>
<keyword id="KW-1185">Reference proteome</keyword>
<name>K6_VACCC</name>
<sequence>MSANCMFNLDNDYIYWKPITYPKALVFISHGAGKHSGRYDELAENISSLGILVFSHDHIGHGRSNGEKMMIDDFGTARGNY</sequence>
<dbReference type="EMBL" id="M35027">
    <property type="protein sequence ID" value="AAA48012.1"/>
    <property type="molecule type" value="Genomic_DNA"/>
</dbReference>
<dbReference type="PIR" id="JS0216">
    <property type="entry name" value="WMVZK6"/>
</dbReference>
<dbReference type="SMR" id="P68465"/>
<dbReference type="ESTHER" id="cowvi-M5L">
    <property type="family name" value="Monoglyceridelipase_lysophospholip"/>
</dbReference>
<dbReference type="Proteomes" id="UP000008269">
    <property type="component" value="Segment"/>
</dbReference>
<dbReference type="Gene3D" id="3.40.50.1820">
    <property type="entry name" value="alpha/beta hydrolase"/>
    <property type="match status" value="1"/>
</dbReference>
<dbReference type="InterPro" id="IPR029058">
    <property type="entry name" value="AB_hydrolase_fold"/>
</dbReference>
<dbReference type="InterPro" id="IPR022742">
    <property type="entry name" value="Hydrolase_4"/>
</dbReference>
<dbReference type="InterPro" id="IPR051044">
    <property type="entry name" value="MAG_DAG_Lipase"/>
</dbReference>
<dbReference type="PANTHER" id="PTHR11614">
    <property type="entry name" value="PHOSPHOLIPASE-RELATED"/>
    <property type="match status" value="1"/>
</dbReference>
<dbReference type="Pfam" id="PF12146">
    <property type="entry name" value="Hydrolase_4"/>
    <property type="match status" value="1"/>
</dbReference>
<dbReference type="SUPFAM" id="SSF53474">
    <property type="entry name" value="alpha/beta-Hydrolases"/>
    <property type="match status" value="1"/>
</dbReference>